<keyword id="KW-1003">Cell membrane</keyword>
<keyword id="KW-0210">Decarboxylase</keyword>
<keyword id="KW-0444">Lipid biosynthesis</keyword>
<keyword id="KW-0443">Lipid metabolism</keyword>
<keyword id="KW-0456">Lyase</keyword>
<keyword id="KW-0472">Membrane</keyword>
<keyword id="KW-0594">Phospholipid biosynthesis</keyword>
<keyword id="KW-1208">Phospholipid metabolism</keyword>
<keyword id="KW-0670">Pyruvate</keyword>
<keyword id="KW-1185">Reference proteome</keyword>
<keyword id="KW-0865">Zymogen</keyword>
<gene>
    <name evidence="1" type="primary">psd</name>
    <name type="ordered locus">NGO_1206</name>
</gene>
<sequence>MNRLYPHPIIAREGWPIIGGGLALSLLVSMCCGWWSLPFWVFTVFALQFFRDPAREIPQNPEAVLSPVDGRIVVVERARDPYRDVDALKISIFMNVFNVHSQKSPADCTVTKVVYNKGKFVNADLDKASTENERNAVLATTASGREITFVQVAGLVARRILCYTQAGAKLSRGERYGFIRFGSRVDMYLPVDAQAQVAIGDKVTGVKTVLARLPLTDSQADPVSQAASVETAANPSAEQQQIEAAAAKIQAAVQDVLKD</sequence>
<proteinExistence type="inferred from homology"/>
<evidence type="ECO:0000255" key="1">
    <source>
        <dbReference type="HAMAP-Rule" id="MF_00664"/>
    </source>
</evidence>
<organism>
    <name type="scientific">Neisseria gonorrhoeae (strain ATCC 700825 / FA 1090)</name>
    <dbReference type="NCBI Taxonomy" id="242231"/>
    <lineage>
        <taxon>Bacteria</taxon>
        <taxon>Pseudomonadati</taxon>
        <taxon>Pseudomonadota</taxon>
        <taxon>Betaproteobacteria</taxon>
        <taxon>Neisseriales</taxon>
        <taxon>Neisseriaceae</taxon>
        <taxon>Neisseria</taxon>
    </lineage>
</organism>
<dbReference type="EC" id="4.1.1.65" evidence="1"/>
<dbReference type="EMBL" id="AE004969">
    <property type="protein sequence ID" value="AAW89865.1"/>
    <property type="molecule type" value="Genomic_DNA"/>
</dbReference>
<dbReference type="RefSeq" id="WP_003689647.1">
    <property type="nucleotide sequence ID" value="NC_002946.2"/>
</dbReference>
<dbReference type="RefSeq" id="YP_208277.1">
    <property type="nucleotide sequence ID" value="NC_002946.2"/>
</dbReference>
<dbReference type="STRING" id="242231.NGO_1206"/>
<dbReference type="KEGG" id="ngo:NGO_1206"/>
<dbReference type="PATRIC" id="fig|242231.10.peg.1415"/>
<dbReference type="HOGENOM" id="CLU_072492_0_0_4"/>
<dbReference type="UniPathway" id="UPA00558">
    <property type="reaction ID" value="UER00616"/>
</dbReference>
<dbReference type="Proteomes" id="UP000000535">
    <property type="component" value="Chromosome"/>
</dbReference>
<dbReference type="GO" id="GO:0005886">
    <property type="term" value="C:plasma membrane"/>
    <property type="evidence" value="ECO:0007669"/>
    <property type="project" value="UniProtKB-SubCell"/>
</dbReference>
<dbReference type="GO" id="GO:0004609">
    <property type="term" value="F:phosphatidylserine decarboxylase activity"/>
    <property type="evidence" value="ECO:0007669"/>
    <property type="project" value="UniProtKB-UniRule"/>
</dbReference>
<dbReference type="GO" id="GO:0006646">
    <property type="term" value="P:phosphatidylethanolamine biosynthetic process"/>
    <property type="evidence" value="ECO:0007669"/>
    <property type="project" value="UniProtKB-UniRule"/>
</dbReference>
<dbReference type="HAMAP" id="MF_00664">
    <property type="entry name" value="PS_decarb_PSD_A"/>
    <property type="match status" value="1"/>
</dbReference>
<dbReference type="InterPro" id="IPR003817">
    <property type="entry name" value="PS_Dcarbxylase"/>
</dbReference>
<dbReference type="InterPro" id="IPR033175">
    <property type="entry name" value="PSD-A"/>
</dbReference>
<dbReference type="NCBIfam" id="TIGR00164">
    <property type="entry name" value="AS_decarb"/>
    <property type="match status" value="1"/>
</dbReference>
<dbReference type="NCBIfam" id="NF003678">
    <property type="entry name" value="PRK05305.1-2"/>
    <property type="match status" value="1"/>
</dbReference>
<dbReference type="NCBIfam" id="NF003680">
    <property type="entry name" value="PRK05305.1-5"/>
    <property type="match status" value="1"/>
</dbReference>
<dbReference type="PANTHER" id="PTHR35809">
    <property type="entry name" value="ARCHAETIDYLSERINE DECARBOXYLASE PROENZYME-RELATED"/>
    <property type="match status" value="1"/>
</dbReference>
<dbReference type="PANTHER" id="PTHR35809:SF1">
    <property type="entry name" value="ARCHAETIDYLSERINE DECARBOXYLASE PROENZYME-RELATED"/>
    <property type="match status" value="1"/>
</dbReference>
<dbReference type="Pfam" id="PF02666">
    <property type="entry name" value="PS_Dcarbxylase"/>
    <property type="match status" value="1"/>
</dbReference>
<accession>Q5F7H2</accession>
<feature type="chain" id="PRO_0000042279" description="Phosphatidylserine decarboxylase beta chain" evidence="1">
    <location>
        <begin position="1"/>
        <end position="182"/>
    </location>
</feature>
<feature type="chain" id="PRO_0000042280" description="Phosphatidylserine decarboxylase alpha chain" evidence="1">
    <location>
        <begin position="183"/>
        <end position="259"/>
    </location>
</feature>
<feature type="active site" description="Schiff-base intermediate with substrate; via pyruvic acid" evidence="1">
    <location>
        <position position="183"/>
    </location>
</feature>
<feature type="site" description="Cleavage (non-hydrolytic); by autocatalysis" evidence="1">
    <location>
        <begin position="182"/>
        <end position="183"/>
    </location>
</feature>
<feature type="modified residue" description="Pyruvic acid (Ser); by autocatalysis" evidence="1">
    <location>
        <position position="183"/>
    </location>
</feature>
<reference key="1">
    <citation type="submission" date="2003-03" db="EMBL/GenBank/DDBJ databases">
        <title>The complete genome sequence of Neisseria gonorrhoeae.</title>
        <authorList>
            <person name="Lewis L.A."/>
            <person name="Gillaspy A.F."/>
            <person name="McLaughlin R.E."/>
            <person name="Gipson M."/>
            <person name="Ducey T.F."/>
            <person name="Ownbey T."/>
            <person name="Hartman K."/>
            <person name="Nydick C."/>
            <person name="Carson M.B."/>
            <person name="Vaughn J."/>
            <person name="Thomson C."/>
            <person name="Song L."/>
            <person name="Lin S."/>
            <person name="Yuan X."/>
            <person name="Najar F."/>
            <person name="Zhan M."/>
            <person name="Ren Q."/>
            <person name="Zhu H."/>
            <person name="Qi S."/>
            <person name="Kenton S.M."/>
            <person name="Lai H."/>
            <person name="White J.D."/>
            <person name="Clifton S."/>
            <person name="Roe B.A."/>
            <person name="Dyer D.W."/>
        </authorList>
    </citation>
    <scope>NUCLEOTIDE SEQUENCE [LARGE SCALE GENOMIC DNA]</scope>
    <source>
        <strain>ATCC 700825 / FA 1090</strain>
    </source>
</reference>
<comment type="function">
    <text evidence="1">Catalyzes the formation of phosphatidylethanolamine (PtdEtn) from phosphatidylserine (PtdSer).</text>
</comment>
<comment type="catalytic activity">
    <reaction evidence="1">
        <text>a 1,2-diacyl-sn-glycero-3-phospho-L-serine + H(+) = a 1,2-diacyl-sn-glycero-3-phosphoethanolamine + CO2</text>
        <dbReference type="Rhea" id="RHEA:20828"/>
        <dbReference type="ChEBI" id="CHEBI:15378"/>
        <dbReference type="ChEBI" id="CHEBI:16526"/>
        <dbReference type="ChEBI" id="CHEBI:57262"/>
        <dbReference type="ChEBI" id="CHEBI:64612"/>
        <dbReference type="EC" id="4.1.1.65"/>
    </reaction>
</comment>
<comment type="cofactor">
    <cofactor evidence="1">
        <name>pyruvate</name>
        <dbReference type="ChEBI" id="CHEBI:15361"/>
    </cofactor>
    <text evidence="1">Binds 1 pyruvoyl group covalently per subunit.</text>
</comment>
<comment type="pathway">
    <text evidence="1">Phospholipid metabolism; phosphatidylethanolamine biosynthesis; phosphatidylethanolamine from CDP-diacylglycerol: step 2/2.</text>
</comment>
<comment type="subunit">
    <text evidence="1">Heterodimer of a large membrane-associated beta subunit and a small pyruvoyl-containing alpha subunit.</text>
</comment>
<comment type="subcellular location">
    <subcellularLocation>
        <location evidence="1">Cell membrane</location>
        <topology evidence="1">Peripheral membrane protein</topology>
    </subcellularLocation>
</comment>
<comment type="PTM">
    <text evidence="1">Is synthesized initially as an inactive proenzyme. Formation of the active enzyme involves a self-maturation process in which the active site pyruvoyl group is generated from an internal serine residue via an autocatalytic post-translational modification. Two non-identical subunits are generated from the proenzyme in this reaction, and the pyruvate is formed at the N-terminus of the alpha chain, which is derived from the carboxyl end of the proenzyme. The post-translation cleavage follows an unusual pathway, termed non-hydrolytic serinolysis, in which the side chain hydroxyl group of the serine supplies its oxygen atom to form the C-terminus of the beta chain, while the remainder of the serine residue undergoes an oxidative deamination to produce ammonia and the pyruvoyl prosthetic group on the alpha chain.</text>
</comment>
<comment type="similarity">
    <text evidence="1">Belongs to the phosphatidylserine decarboxylase family. PSD-A subfamily.</text>
</comment>
<protein>
    <recommendedName>
        <fullName evidence="1">Phosphatidylserine decarboxylase proenzyme</fullName>
        <ecNumber evidence="1">4.1.1.65</ecNumber>
    </recommendedName>
    <component>
        <recommendedName>
            <fullName evidence="1">Phosphatidylserine decarboxylase alpha chain</fullName>
        </recommendedName>
    </component>
    <component>
        <recommendedName>
            <fullName evidence="1">Phosphatidylserine decarboxylase beta chain</fullName>
        </recommendedName>
    </component>
</protein>
<name>PSD_NEIG1</name>